<gene>
    <name evidence="1" type="primary">tyrS</name>
    <name type="ordered locus">AHA_0581</name>
</gene>
<keyword id="KW-0030">Aminoacyl-tRNA synthetase</keyword>
<keyword id="KW-0067">ATP-binding</keyword>
<keyword id="KW-0963">Cytoplasm</keyword>
<keyword id="KW-0436">Ligase</keyword>
<keyword id="KW-0547">Nucleotide-binding</keyword>
<keyword id="KW-0648">Protein biosynthesis</keyword>
<keyword id="KW-1185">Reference proteome</keyword>
<keyword id="KW-0694">RNA-binding</keyword>
<sequence>MINPHLLDELTRRGLVAQNSDPVALADHLATPRTVYCGFDPTAGSLHIGHLVPLLMLRRFQLAGHTPVALVGGATGLIGDPSFKATERNLNSSETVQGWVASLSAQIKALLPASEGLAAPLLVNNADWMGQMSALDFLRDIGKHFSVNAMLVRESVRQRLARPDQGISFTEFSYALLQSQDYAVLNQRLGCTLQIGGNDQWGNITSGMDLTRRLHQAQVYGMTLPLITKADGTKFGKTEGGAIWLDPALTSPYAFYQFWLGTADEDVYRFLRYYSFMPLTEIEALEAEDAKRQGRKLAQQVLADELTELVHGKGALAAAQRISELLFSGEVARLGESDLAQLAQDGMPGWRIEGETDLVTLLVESGLANSKRIARELLAAGAISLNGEIRREEPLRAADRLFGRHLLLRRGKKQYRLVTWQG</sequence>
<name>SYY_AERHH</name>
<comment type="function">
    <text evidence="1">Catalyzes the attachment of tyrosine to tRNA(Tyr) in a two-step reaction: tyrosine is first activated by ATP to form Tyr-AMP and then transferred to the acceptor end of tRNA(Tyr).</text>
</comment>
<comment type="catalytic activity">
    <reaction evidence="1">
        <text>tRNA(Tyr) + L-tyrosine + ATP = L-tyrosyl-tRNA(Tyr) + AMP + diphosphate + H(+)</text>
        <dbReference type="Rhea" id="RHEA:10220"/>
        <dbReference type="Rhea" id="RHEA-COMP:9706"/>
        <dbReference type="Rhea" id="RHEA-COMP:9707"/>
        <dbReference type="ChEBI" id="CHEBI:15378"/>
        <dbReference type="ChEBI" id="CHEBI:30616"/>
        <dbReference type="ChEBI" id="CHEBI:33019"/>
        <dbReference type="ChEBI" id="CHEBI:58315"/>
        <dbReference type="ChEBI" id="CHEBI:78442"/>
        <dbReference type="ChEBI" id="CHEBI:78536"/>
        <dbReference type="ChEBI" id="CHEBI:456215"/>
        <dbReference type="EC" id="6.1.1.1"/>
    </reaction>
</comment>
<comment type="subunit">
    <text evidence="1">Homodimer.</text>
</comment>
<comment type="subcellular location">
    <subcellularLocation>
        <location evidence="1">Cytoplasm</location>
    </subcellularLocation>
</comment>
<comment type="similarity">
    <text evidence="1">Belongs to the class-I aminoacyl-tRNA synthetase family. TyrS type 1 subfamily.</text>
</comment>
<organism>
    <name type="scientific">Aeromonas hydrophila subsp. hydrophila (strain ATCC 7966 / DSM 30187 / BCRC 13018 / CCUG 14551 / JCM 1027 / KCTC 2358 / NCIMB 9240 / NCTC 8049)</name>
    <dbReference type="NCBI Taxonomy" id="380703"/>
    <lineage>
        <taxon>Bacteria</taxon>
        <taxon>Pseudomonadati</taxon>
        <taxon>Pseudomonadota</taxon>
        <taxon>Gammaproteobacteria</taxon>
        <taxon>Aeromonadales</taxon>
        <taxon>Aeromonadaceae</taxon>
        <taxon>Aeromonas</taxon>
    </lineage>
</organism>
<dbReference type="EC" id="6.1.1.1" evidence="1"/>
<dbReference type="EMBL" id="CP000462">
    <property type="protein sequence ID" value="ABK39461.1"/>
    <property type="molecule type" value="Genomic_DNA"/>
</dbReference>
<dbReference type="RefSeq" id="WP_011704551.1">
    <property type="nucleotide sequence ID" value="NC_008570.1"/>
</dbReference>
<dbReference type="RefSeq" id="YP_855114.1">
    <property type="nucleotide sequence ID" value="NC_008570.1"/>
</dbReference>
<dbReference type="SMR" id="A0KFT8"/>
<dbReference type="STRING" id="380703.AHA_0581"/>
<dbReference type="EnsemblBacteria" id="ABK39461">
    <property type="protein sequence ID" value="ABK39461"/>
    <property type="gene ID" value="AHA_0581"/>
</dbReference>
<dbReference type="GeneID" id="4489403"/>
<dbReference type="KEGG" id="aha:AHA_0581"/>
<dbReference type="PATRIC" id="fig|380703.7.peg.577"/>
<dbReference type="eggNOG" id="COG0162">
    <property type="taxonomic scope" value="Bacteria"/>
</dbReference>
<dbReference type="HOGENOM" id="CLU_024003_0_3_6"/>
<dbReference type="OrthoDB" id="9804243at2"/>
<dbReference type="Proteomes" id="UP000000756">
    <property type="component" value="Chromosome"/>
</dbReference>
<dbReference type="GO" id="GO:0005829">
    <property type="term" value="C:cytosol"/>
    <property type="evidence" value="ECO:0007669"/>
    <property type="project" value="TreeGrafter"/>
</dbReference>
<dbReference type="GO" id="GO:0005524">
    <property type="term" value="F:ATP binding"/>
    <property type="evidence" value="ECO:0007669"/>
    <property type="project" value="UniProtKB-UniRule"/>
</dbReference>
<dbReference type="GO" id="GO:0003723">
    <property type="term" value="F:RNA binding"/>
    <property type="evidence" value="ECO:0007669"/>
    <property type="project" value="UniProtKB-KW"/>
</dbReference>
<dbReference type="GO" id="GO:0004831">
    <property type="term" value="F:tyrosine-tRNA ligase activity"/>
    <property type="evidence" value="ECO:0007669"/>
    <property type="project" value="UniProtKB-UniRule"/>
</dbReference>
<dbReference type="GO" id="GO:0006437">
    <property type="term" value="P:tyrosyl-tRNA aminoacylation"/>
    <property type="evidence" value="ECO:0007669"/>
    <property type="project" value="UniProtKB-UniRule"/>
</dbReference>
<dbReference type="CDD" id="cd00165">
    <property type="entry name" value="S4"/>
    <property type="match status" value="1"/>
</dbReference>
<dbReference type="CDD" id="cd00805">
    <property type="entry name" value="TyrRS_core"/>
    <property type="match status" value="1"/>
</dbReference>
<dbReference type="FunFam" id="1.10.240.10:FF:000001">
    <property type="entry name" value="Tyrosine--tRNA ligase"/>
    <property type="match status" value="1"/>
</dbReference>
<dbReference type="FunFam" id="3.40.50.620:FF:000008">
    <property type="entry name" value="Tyrosine--tRNA ligase"/>
    <property type="match status" value="1"/>
</dbReference>
<dbReference type="Gene3D" id="3.40.50.620">
    <property type="entry name" value="HUPs"/>
    <property type="match status" value="1"/>
</dbReference>
<dbReference type="Gene3D" id="3.10.290.10">
    <property type="entry name" value="RNA-binding S4 domain"/>
    <property type="match status" value="1"/>
</dbReference>
<dbReference type="Gene3D" id="1.10.240.10">
    <property type="entry name" value="Tyrosyl-Transfer RNA Synthetase"/>
    <property type="match status" value="1"/>
</dbReference>
<dbReference type="HAMAP" id="MF_02006">
    <property type="entry name" value="Tyr_tRNA_synth_type1"/>
    <property type="match status" value="1"/>
</dbReference>
<dbReference type="InterPro" id="IPR001412">
    <property type="entry name" value="aa-tRNA-synth_I_CS"/>
</dbReference>
<dbReference type="InterPro" id="IPR002305">
    <property type="entry name" value="aa-tRNA-synth_Ic"/>
</dbReference>
<dbReference type="InterPro" id="IPR014729">
    <property type="entry name" value="Rossmann-like_a/b/a_fold"/>
</dbReference>
<dbReference type="InterPro" id="IPR036986">
    <property type="entry name" value="S4_RNA-bd_sf"/>
</dbReference>
<dbReference type="InterPro" id="IPR054608">
    <property type="entry name" value="SYY-like_C"/>
</dbReference>
<dbReference type="InterPro" id="IPR002307">
    <property type="entry name" value="Tyr-tRNA-ligase"/>
</dbReference>
<dbReference type="InterPro" id="IPR024088">
    <property type="entry name" value="Tyr-tRNA-ligase_bac-type"/>
</dbReference>
<dbReference type="InterPro" id="IPR024107">
    <property type="entry name" value="Tyr-tRNA-ligase_bac_1"/>
</dbReference>
<dbReference type="NCBIfam" id="TIGR00234">
    <property type="entry name" value="tyrS"/>
    <property type="match status" value="1"/>
</dbReference>
<dbReference type="PANTHER" id="PTHR11766:SF0">
    <property type="entry name" value="TYROSINE--TRNA LIGASE, MITOCHONDRIAL"/>
    <property type="match status" value="1"/>
</dbReference>
<dbReference type="PANTHER" id="PTHR11766">
    <property type="entry name" value="TYROSYL-TRNA SYNTHETASE"/>
    <property type="match status" value="1"/>
</dbReference>
<dbReference type="Pfam" id="PF22421">
    <property type="entry name" value="SYY_C-terminal"/>
    <property type="match status" value="1"/>
</dbReference>
<dbReference type="Pfam" id="PF00579">
    <property type="entry name" value="tRNA-synt_1b"/>
    <property type="match status" value="1"/>
</dbReference>
<dbReference type="PRINTS" id="PR01040">
    <property type="entry name" value="TRNASYNTHTYR"/>
</dbReference>
<dbReference type="SUPFAM" id="SSF55174">
    <property type="entry name" value="Alpha-L RNA-binding motif"/>
    <property type="match status" value="1"/>
</dbReference>
<dbReference type="SUPFAM" id="SSF52374">
    <property type="entry name" value="Nucleotidylyl transferase"/>
    <property type="match status" value="1"/>
</dbReference>
<dbReference type="PROSITE" id="PS00178">
    <property type="entry name" value="AA_TRNA_LIGASE_I"/>
    <property type="match status" value="1"/>
</dbReference>
<dbReference type="PROSITE" id="PS50889">
    <property type="entry name" value="S4"/>
    <property type="match status" value="1"/>
</dbReference>
<reference key="1">
    <citation type="journal article" date="2006" name="J. Bacteriol.">
        <title>Genome sequence of Aeromonas hydrophila ATCC 7966T: jack of all trades.</title>
        <authorList>
            <person name="Seshadri R."/>
            <person name="Joseph S.W."/>
            <person name="Chopra A.K."/>
            <person name="Sha J."/>
            <person name="Shaw J."/>
            <person name="Graf J."/>
            <person name="Haft D.H."/>
            <person name="Wu M."/>
            <person name="Ren Q."/>
            <person name="Rosovitz M.J."/>
            <person name="Madupu R."/>
            <person name="Tallon L."/>
            <person name="Kim M."/>
            <person name="Jin S."/>
            <person name="Vuong H."/>
            <person name="Stine O.C."/>
            <person name="Ali A."/>
            <person name="Horneman A.J."/>
            <person name="Heidelberg J.F."/>
        </authorList>
    </citation>
    <scope>NUCLEOTIDE SEQUENCE [LARGE SCALE GENOMIC DNA]</scope>
    <source>
        <strain>ATCC 7966 / DSM 30187 / BCRC 13018 / CCUG 14551 / JCM 1027 / KCTC 2358 / NCIMB 9240 / NCTC 8049</strain>
    </source>
</reference>
<protein>
    <recommendedName>
        <fullName evidence="1">Tyrosine--tRNA ligase</fullName>
        <ecNumber evidence="1">6.1.1.1</ecNumber>
    </recommendedName>
    <alternativeName>
        <fullName evidence="1">Tyrosyl-tRNA synthetase</fullName>
        <shortName evidence="1">TyrRS</shortName>
    </alternativeName>
</protein>
<feature type="chain" id="PRO_1000088574" description="Tyrosine--tRNA ligase">
    <location>
        <begin position="1"/>
        <end position="422"/>
    </location>
</feature>
<feature type="domain" description="S4 RNA-binding" evidence="1">
    <location>
        <begin position="356"/>
        <end position="420"/>
    </location>
</feature>
<feature type="short sequence motif" description="'HIGH' region">
    <location>
        <begin position="41"/>
        <end position="50"/>
    </location>
</feature>
<feature type="short sequence motif" description="'KMSKS' region">
    <location>
        <begin position="234"/>
        <end position="238"/>
    </location>
</feature>
<feature type="binding site" evidence="1">
    <location>
        <position position="36"/>
    </location>
    <ligand>
        <name>L-tyrosine</name>
        <dbReference type="ChEBI" id="CHEBI:58315"/>
    </ligand>
</feature>
<feature type="binding site" evidence="1">
    <location>
        <position position="174"/>
    </location>
    <ligand>
        <name>L-tyrosine</name>
        <dbReference type="ChEBI" id="CHEBI:58315"/>
    </ligand>
</feature>
<feature type="binding site" evidence="1">
    <location>
        <position position="178"/>
    </location>
    <ligand>
        <name>L-tyrosine</name>
        <dbReference type="ChEBI" id="CHEBI:58315"/>
    </ligand>
</feature>
<feature type="binding site" evidence="1">
    <location>
        <position position="237"/>
    </location>
    <ligand>
        <name>ATP</name>
        <dbReference type="ChEBI" id="CHEBI:30616"/>
    </ligand>
</feature>
<accession>A0KFT8</accession>
<evidence type="ECO:0000255" key="1">
    <source>
        <dbReference type="HAMAP-Rule" id="MF_02006"/>
    </source>
</evidence>
<proteinExistence type="inferred from homology"/>